<dbReference type="EC" id="3.2.1.147" evidence="10"/>
<dbReference type="EC" id="3.2.1.21" evidence="10"/>
<dbReference type="EMBL" id="FJ268795">
    <property type="protein sequence ID" value="ACO95139.1"/>
    <property type="molecule type" value="Genomic_DNA"/>
</dbReference>
<dbReference type="EMBL" id="AC007519">
    <property type="protein sequence ID" value="AAD46026.1"/>
    <property type="status" value="ALT_SEQ"/>
    <property type="molecule type" value="Genomic_DNA"/>
</dbReference>
<dbReference type="EMBL" id="CP002684">
    <property type="protein sequence ID" value="AEE32191.1"/>
    <property type="molecule type" value="Genomic_DNA"/>
</dbReference>
<dbReference type="EMBL" id="BT000471">
    <property type="protein sequence ID" value="AAN17448.1"/>
    <property type="molecule type" value="mRNA"/>
</dbReference>
<dbReference type="EMBL" id="BT002202">
    <property type="protein sequence ID" value="AAN72213.1"/>
    <property type="molecule type" value="mRNA"/>
</dbReference>
<dbReference type="EMBL" id="BT002458">
    <property type="protein sequence ID" value="AAO00818.1"/>
    <property type="molecule type" value="mRNA"/>
</dbReference>
<dbReference type="PIR" id="G96516">
    <property type="entry name" value="G96516"/>
</dbReference>
<dbReference type="RefSeq" id="NP_175191.2">
    <molecule id="Q8GRX1-1"/>
    <property type="nucleotide sequence ID" value="NM_103653.3"/>
</dbReference>
<dbReference type="SMR" id="Q8GRX1"/>
<dbReference type="BioGRID" id="26394">
    <property type="interactions" value="1"/>
</dbReference>
<dbReference type="FunCoup" id="Q8GRX1">
    <property type="interactions" value="70"/>
</dbReference>
<dbReference type="STRING" id="3702.Q8GRX1"/>
<dbReference type="CAZy" id="GH1">
    <property type="family name" value="Glycoside Hydrolase Family 1"/>
</dbReference>
<dbReference type="GlyCosmos" id="Q8GRX1">
    <property type="glycosylation" value="4 sites, No reported glycans"/>
</dbReference>
<dbReference type="GlyGen" id="Q8GRX1">
    <property type="glycosylation" value="4 sites"/>
</dbReference>
<dbReference type="PaxDb" id="3702-AT1G47600.1"/>
<dbReference type="ProteomicsDB" id="240831">
    <molecule id="Q8GRX1-1"/>
</dbReference>
<dbReference type="EnsemblPlants" id="AT1G47600.1">
    <molecule id="Q8GRX1-1"/>
    <property type="protein sequence ID" value="AT1G47600.1"/>
    <property type="gene ID" value="AT1G47600"/>
</dbReference>
<dbReference type="GeneID" id="841169"/>
<dbReference type="Gramene" id="AT1G47600.1">
    <molecule id="Q8GRX1-1"/>
    <property type="protein sequence ID" value="AT1G47600.1"/>
    <property type="gene ID" value="AT1G47600"/>
</dbReference>
<dbReference type="KEGG" id="ath:AT1G47600"/>
<dbReference type="Araport" id="AT1G47600"/>
<dbReference type="TAIR" id="AT1G47600">
    <property type="gene designation" value="BGLU34"/>
</dbReference>
<dbReference type="eggNOG" id="KOG0626">
    <property type="taxonomic scope" value="Eukaryota"/>
</dbReference>
<dbReference type="InParanoid" id="Q8GRX1"/>
<dbReference type="OMA" id="ARAMSWN"/>
<dbReference type="PhylomeDB" id="Q8GRX1"/>
<dbReference type="BRENDA" id="3.2.1.147">
    <property type="organism ID" value="399"/>
</dbReference>
<dbReference type="SABIO-RK" id="Q8GRX1"/>
<dbReference type="PRO" id="PR:Q8GRX1"/>
<dbReference type="Proteomes" id="UP000006548">
    <property type="component" value="Chromosome 1"/>
</dbReference>
<dbReference type="ExpressionAtlas" id="Q8GRX1">
    <property type="expression patterns" value="baseline and differential"/>
</dbReference>
<dbReference type="GO" id="GO:0008422">
    <property type="term" value="F:beta-glucosidase activity"/>
    <property type="evidence" value="ECO:0000314"/>
    <property type="project" value="TAIR"/>
</dbReference>
<dbReference type="GO" id="GO:0019137">
    <property type="term" value="F:thioglucosidase activity"/>
    <property type="evidence" value="ECO:0000314"/>
    <property type="project" value="TAIR"/>
</dbReference>
<dbReference type="GO" id="GO:0005975">
    <property type="term" value="P:carbohydrate metabolic process"/>
    <property type="evidence" value="ECO:0007669"/>
    <property type="project" value="InterPro"/>
</dbReference>
<dbReference type="GO" id="GO:0019760">
    <property type="term" value="P:glucosinolate metabolic process"/>
    <property type="evidence" value="ECO:0000315"/>
    <property type="project" value="TAIR"/>
</dbReference>
<dbReference type="FunFam" id="3.20.20.80:FF:000041">
    <property type="entry name" value="Beta-glucosidase 7"/>
    <property type="match status" value="1"/>
</dbReference>
<dbReference type="Gene3D" id="3.20.20.80">
    <property type="entry name" value="Glycosidases"/>
    <property type="match status" value="1"/>
</dbReference>
<dbReference type="InterPro" id="IPR001360">
    <property type="entry name" value="Glyco_hydro_1"/>
</dbReference>
<dbReference type="InterPro" id="IPR018120">
    <property type="entry name" value="Glyco_hydro_1_AS"/>
</dbReference>
<dbReference type="InterPro" id="IPR033132">
    <property type="entry name" value="Glyco_hydro_1_N_CS"/>
</dbReference>
<dbReference type="InterPro" id="IPR017853">
    <property type="entry name" value="Glycoside_hydrolase_SF"/>
</dbReference>
<dbReference type="PANTHER" id="PTHR10353">
    <property type="entry name" value="GLYCOSYL HYDROLASE"/>
    <property type="match status" value="1"/>
</dbReference>
<dbReference type="PANTHER" id="PTHR10353:SF301">
    <property type="entry name" value="MYROSINASE 4-RELATED"/>
    <property type="match status" value="1"/>
</dbReference>
<dbReference type="Pfam" id="PF00232">
    <property type="entry name" value="Glyco_hydro_1"/>
    <property type="match status" value="1"/>
</dbReference>
<dbReference type="PRINTS" id="PR00131">
    <property type="entry name" value="GLHYDRLASE1"/>
</dbReference>
<dbReference type="SUPFAM" id="SSF51445">
    <property type="entry name" value="(Trans)glycosidases"/>
    <property type="match status" value="1"/>
</dbReference>
<dbReference type="PROSITE" id="PS00572">
    <property type="entry name" value="GLYCOSYL_HYDROL_F1_1"/>
    <property type="match status" value="1"/>
</dbReference>
<dbReference type="PROSITE" id="PS00653">
    <property type="entry name" value="GLYCOSYL_HYDROL_F1_2"/>
    <property type="match status" value="1"/>
</dbReference>
<keyword id="KW-0025">Alternative splicing</keyword>
<keyword id="KW-1015">Disulfide bond</keyword>
<keyword id="KW-0325">Glycoprotein</keyword>
<keyword id="KW-0326">Glycosidase</keyword>
<keyword id="KW-0378">Hydrolase</keyword>
<keyword id="KW-1185">Reference proteome</keyword>
<keyword id="KW-0732">Signal</keyword>
<feature type="signal peptide" evidence="7">
    <location>
        <begin position="1"/>
        <end position="23"/>
    </location>
</feature>
<feature type="chain" id="PRO_0000389596" description="Myrosinase 4">
    <location>
        <begin position="24"/>
        <end position="511"/>
    </location>
</feature>
<feature type="active site" description="Nucleophile" evidence="9">
    <location>
        <position position="418"/>
    </location>
</feature>
<feature type="binding site" evidence="3">
    <location>
        <position position="64"/>
    </location>
    <ligand>
        <name>a beta-D-glucoside</name>
        <dbReference type="ChEBI" id="CHEBI:22798"/>
    </ligand>
</feature>
<feature type="binding site" evidence="3">
    <location>
        <position position="165"/>
    </location>
    <ligand>
        <name>a beta-D-glucoside</name>
        <dbReference type="ChEBI" id="CHEBI:22798"/>
    </ligand>
</feature>
<feature type="binding site" evidence="4">
    <location>
        <begin position="210"/>
        <end position="211"/>
    </location>
    <ligand>
        <name>a beta-D-glucoside</name>
        <dbReference type="ChEBI" id="CHEBI:22798"/>
    </ligand>
</feature>
<feature type="binding site" evidence="3">
    <location>
        <position position="351"/>
    </location>
    <ligand>
        <name>a beta-D-glucoside</name>
        <dbReference type="ChEBI" id="CHEBI:22798"/>
    </ligand>
</feature>
<feature type="binding site" evidence="6">
    <location>
        <position position="418"/>
    </location>
    <ligand>
        <name>a beta-D-glucoside</name>
        <dbReference type="ChEBI" id="CHEBI:22798"/>
    </ligand>
</feature>
<feature type="binding site" evidence="3">
    <location>
        <position position="467"/>
    </location>
    <ligand>
        <name>a beta-D-glucoside</name>
        <dbReference type="ChEBI" id="CHEBI:22798"/>
    </ligand>
</feature>
<feature type="binding site" evidence="5">
    <location>
        <begin position="474"/>
        <end position="475"/>
    </location>
    <ligand>
        <name>a beta-D-glucoside</name>
        <dbReference type="ChEBI" id="CHEBI:22798"/>
    </ligand>
</feature>
<feature type="binding site" evidence="2">
    <location>
        <position position="483"/>
    </location>
    <ligand>
        <name>a beta-D-glucoside</name>
        <dbReference type="ChEBI" id="CHEBI:22798"/>
    </ligand>
</feature>
<feature type="glycosylation site" description="N-linked (GlcNAc...) asparagine" evidence="8">
    <location>
        <position position="46"/>
    </location>
</feature>
<feature type="glycosylation site" description="N-linked (GlcNAc...) asparagine" evidence="8">
    <location>
        <position position="53"/>
    </location>
</feature>
<feature type="glycosylation site" description="N-linked (GlcNAc...) asparagine" evidence="8">
    <location>
        <position position="428"/>
    </location>
</feature>
<feature type="glycosylation site" description="N-linked (GlcNAc...) asparagine" evidence="8">
    <location>
        <position position="489"/>
    </location>
</feature>
<feature type="disulfide bond" evidence="1">
    <location>
        <begin position="31"/>
        <end position="450"/>
    </location>
</feature>
<feature type="disulfide bond" evidence="1">
    <location>
        <begin position="39"/>
        <end position="445"/>
    </location>
</feature>
<feature type="disulfide bond" evidence="3">
    <location>
        <begin position="230"/>
        <end position="233"/>
    </location>
</feature>
<reference key="1">
    <citation type="submission" date="2008-10" db="EMBL/GenBank/DDBJ databases">
        <title>Characterization of a new subfamily of thioglucoside glucohydrolases.</title>
        <authorList>
            <person name="Zhang J."/>
        </authorList>
    </citation>
    <scope>NUCLEOTIDE SEQUENCE [GENOMIC DNA]</scope>
    <source>
        <strain>cv. Columbia</strain>
    </source>
</reference>
<reference key="2">
    <citation type="journal article" date="2000" name="Nature">
        <title>Sequence and analysis of chromosome 1 of the plant Arabidopsis thaliana.</title>
        <authorList>
            <person name="Theologis A."/>
            <person name="Ecker J.R."/>
            <person name="Palm C.J."/>
            <person name="Federspiel N.A."/>
            <person name="Kaul S."/>
            <person name="White O."/>
            <person name="Alonso J."/>
            <person name="Altafi H."/>
            <person name="Araujo R."/>
            <person name="Bowman C.L."/>
            <person name="Brooks S.Y."/>
            <person name="Buehler E."/>
            <person name="Chan A."/>
            <person name="Chao Q."/>
            <person name="Chen H."/>
            <person name="Cheuk R.F."/>
            <person name="Chin C.W."/>
            <person name="Chung M.K."/>
            <person name="Conn L."/>
            <person name="Conway A.B."/>
            <person name="Conway A.R."/>
            <person name="Creasy T.H."/>
            <person name="Dewar K."/>
            <person name="Dunn P."/>
            <person name="Etgu P."/>
            <person name="Feldblyum T.V."/>
            <person name="Feng J.-D."/>
            <person name="Fong B."/>
            <person name="Fujii C.Y."/>
            <person name="Gill J.E."/>
            <person name="Goldsmith A.D."/>
            <person name="Haas B."/>
            <person name="Hansen N.F."/>
            <person name="Hughes B."/>
            <person name="Huizar L."/>
            <person name="Hunter J.L."/>
            <person name="Jenkins J."/>
            <person name="Johnson-Hopson C."/>
            <person name="Khan S."/>
            <person name="Khaykin E."/>
            <person name="Kim C.J."/>
            <person name="Koo H.L."/>
            <person name="Kremenetskaia I."/>
            <person name="Kurtz D.B."/>
            <person name="Kwan A."/>
            <person name="Lam B."/>
            <person name="Langin-Hooper S."/>
            <person name="Lee A."/>
            <person name="Lee J.M."/>
            <person name="Lenz C.A."/>
            <person name="Li J.H."/>
            <person name="Li Y.-P."/>
            <person name="Lin X."/>
            <person name="Liu S.X."/>
            <person name="Liu Z.A."/>
            <person name="Luros J.S."/>
            <person name="Maiti R."/>
            <person name="Marziali A."/>
            <person name="Militscher J."/>
            <person name="Miranda M."/>
            <person name="Nguyen M."/>
            <person name="Nierman W.C."/>
            <person name="Osborne B.I."/>
            <person name="Pai G."/>
            <person name="Peterson J."/>
            <person name="Pham P.K."/>
            <person name="Rizzo M."/>
            <person name="Rooney T."/>
            <person name="Rowley D."/>
            <person name="Sakano H."/>
            <person name="Salzberg S.L."/>
            <person name="Schwartz J.R."/>
            <person name="Shinn P."/>
            <person name="Southwick A.M."/>
            <person name="Sun H."/>
            <person name="Tallon L.J."/>
            <person name="Tambunga G."/>
            <person name="Toriumi M.J."/>
            <person name="Town C.D."/>
            <person name="Utterback T."/>
            <person name="Van Aken S."/>
            <person name="Vaysberg M."/>
            <person name="Vysotskaia V.S."/>
            <person name="Walker M."/>
            <person name="Wu D."/>
            <person name="Yu G."/>
            <person name="Fraser C.M."/>
            <person name="Venter J.C."/>
            <person name="Davis R.W."/>
        </authorList>
    </citation>
    <scope>NUCLEOTIDE SEQUENCE [LARGE SCALE GENOMIC DNA]</scope>
    <source>
        <strain>cv. Columbia</strain>
    </source>
</reference>
<reference key="3">
    <citation type="journal article" date="2017" name="Plant J.">
        <title>Araport11: a complete reannotation of the Arabidopsis thaliana reference genome.</title>
        <authorList>
            <person name="Cheng C.Y."/>
            <person name="Krishnakumar V."/>
            <person name="Chan A.P."/>
            <person name="Thibaud-Nissen F."/>
            <person name="Schobel S."/>
            <person name="Town C.D."/>
        </authorList>
    </citation>
    <scope>GENOME REANNOTATION</scope>
    <source>
        <strain>cv. Columbia</strain>
    </source>
</reference>
<reference key="4">
    <citation type="journal article" date="2003" name="Science">
        <title>Empirical analysis of transcriptional activity in the Arabidopsis genome.</title>
        <authorList>
            <person name="Yamada K."/>
            <person name="Lim J."/>
            <person name="Dale J.M."/>
            <person name="Chen H."/>
            <person name="Shinn P."/>
            <person name="Palm C.J."/>
            <person name="Southwick A.M."/>
            <person name="Wu H.C."/>
            <person name="Kim C.J."/>
            <person name="Nguyen M."/>
            <person name="Pham P.K."/>
            <person name="Cheuk R.F."/>
            <person name="Karlin-Newmann G."/>
            <person name="Liu S.X."/>
            <person name="Lam B."/>
            <person name="Sakano H."/>
            <person name="Wu T."/>
            <person name="Yu G."/>
            <person name="Miranda M."/>
            <person name="Quach H.L."/>
            <person name="Tripp M."/>
            <person name="Chang C.H."/>
            <person name="Lee J.M."/>
            <person name="Toriumi M.J."/>
            <person name="Chan M.M."/>
            <person name="Tang C.C."/>
            <person name="Onodera C.S."/>
            <person name="Deng J.M."/>
            <person name="Akiyama K."/>
            <person name="Ansari Y."/>
            <person name="Arakawa T."/>
            <person name="Banh J."/>
            <person name="Banno F."/>
            <person name="Bowser L."/>
            <person name="Brooks S.Y."/>
            <person name="Carninci P."/>
            <person name="Chao Q."/>
            <person name="Choy N."/>
            <person name="Enju A."/>
            <person name="Goldsmith A.D."/>
            <person name="Gurjal M."/>
            <person name="Hansen N.F."/>
            <person name="Hayashizaki Y."/>
            <person name="Johnson-Hopson C."/>
            <person name="Hsuan V.W."/>
            <person name="Iida K."/>
            <person name="Karnes M."/>
            <person name="Khan S."/>
            <person name="Koesema E."/>
            <person name="Ishida J."/>
            <person name="Jiang P.X."/>
            <person name="Jones T."/>
            <person name="Kawai J."/>
            <person name="Kamiya A."/>
            <person name="Meyers C."/>
            <person name="Nakajima M."/>
            <person name="Narusaka M."/>
            <person name="Seki M."/>
            <person name="Sakurai T."/>
            <person name="Satou M."/>
            <person name="Tamse R."/>
            <person name="Vaysberg M."/>
            <person name="Wallender E.K."/>
            <person name="Wong C."/>
            <person name="Yamamura Y."/>
            <person name="Yuan S."/>
            <person name="Shinozaki K."/>
            <person name="Davis R.W."/>
            <person name="Theologis A."/>
            <person name="Ecker J.R."/>
        </authorList>
    </citation>
    <scope>NUCLEOTIDE SEQUENCE [LARGE SCALE MRNA]</scope>
    <source>
        <strain>cv. Columbia</strain>
    </source>
</reference>
<reference key="5">
    <citation type="journal article" date="2004" name="Plant Mol. Biol.">
        <title>Functional genomic analysis of Arabidopsis thaliana glycoside hydrolase family 1.</title>
        <authorList>
            <person name="Xu Z."/>
            <person name="Escamilla-Trevino L.L."/>
            <person name="Zeng L."/>
            <person name="Lalgondar M."/>
            <person name="Bevan D.R."/>
            <person name="Winkel B.S.J."/>
            <person name="Mohamed A."/>
            <person name="Cheng C.-L."/>
            <person name="Shih M.-C."/>
            <person name="Poulton J.E."/>
            <person name="Esen A."/>
        </authorList>
    </citation>
    <scope>GENE FAMILY</scope>
    <scope>NOMENCLATURE</scope>
</reference>
<reference key="6">
    <citation type="journal article" date="2009" name="Phytochemistry">
        <title>Myrosinases from root and leaves of Arabidopsis thaliana have different catalytic properties.</title>
        <authorList>
            <person name="Andersson D."/>
            <person name="Chakrabarty R."/>
            <person name="Bejai S."/>
            <person name="Zhang J."/>
            <person name="Rask L."/>
            <person name="Meijer J."/>
        </authorList>
    </citation>
    <scope>FUNCTION</scope>
    <scope>CATALYTIC ACTIVITY</scope>
    <scope>BIOPHYSICOCHEMICAL PROPERTIES</scope>
    <scope>TISSUE SPECIFICITY</scope>
</reference>
<organism>
    <name type="scientific">Arabidopsis thaliana</name>
    <name type="common">Mouse-ear cress</name>
    <dbReference type="NCBI Taxonomy" id="3702"/>
    <lineage>
        <taxon>Eukaryota</taxon>
        <taxon>Viridiplantae</taxon>
        <taxon>Streptophyta</taxon>
        <taxon>Embryophyta</taxon>
        <taxon>Tracheophyta</taxon>
        <taxon>Spermatophyta</taxon>
        <taxon>Magnoliopsida</taxon>
        <taxon>eudicotyledons</taxon>
        <taxon>Gunneridae</taxon>
        <taxon>Pentapetalae</taxon>
        <taxon>rosids</taxon>
        <taxon>malvids</taxon>
        <taxon>Brassicales</taxon>
        <taxon>Brassicaceae</taxon>
        <taxon>Camelineae</taxon>
        <taxon>Arabidopsis</taxon>
    </lineage>
</organism>
<protein>
    <recommendedName>
        <fullName evidence="12">Myrosinase 4</fullName>
        <ecNumber evidence="10">3.2.1.147</ecNumber>
    </recommendedName>
    <alternativeName>
        <fullName evidence="11">Beta-glucosidase 34</fullName>
        <shortName evidence="11">AtBGLU34</shortName>
        <ecNumber evidence="10">3.2.1.21</ecNumber>
    </alternativeName>
    <alternativeName>
        <fullName evidence="12">Sinigrinase 4</fullName>
    </alternativeName>
    <alternativeName>
        <fullName evidence="12">Thioglucosidase 4</fullName>
    </alternativeName>
</protein>
<gene>
    <name evidence="12" type="primary">TGG4</name>
    <name evidence="11" type="synonym">BGLU34</name>
    <name evidence="14" type="ordered locus">At1g47600</name>
    <name evidence="15" type="ORF">F16N3.11</name>
</gene>
<comment type="function">
    <text evidence="10">Hydrolyzes sinigrin and, with lower efficiency, p-nitrophenyl beta-D-glucoside.</text>
</comment>
<comment type="catalytic activity">
    <reaction evidence="10">
        <text>a thioglucoside + H2O = a sugar + a thiol.</text>
        <dbReference type="EC" id="3.2.1.147"/>
    </reaction>
</comment>
<comment type="catalytic activity">
    <reaction evidence="10">
        <text>Hydrolysis of terminal, non-reducing beta-D-glucosyl residues with release of beta-D-glucose.</text>
        <dbReference type="EC" id="3.2.1.21"/>
    </reaction>
</comment>
<comment type="biophysicochemical properties">
    <kinetics>
        <KM evidence="10">245 uM for sinigrin (at pH 4.5)</KM>
        <KM evidence="10">28 mM for p-nitrophenyl beta-D-glucoside (at pH 4.5)</KM>
        <Vmax evidence="10">12.2 umol/min/mg enzyme with sinigrin as substrate (at pH 4.5)</Vmax>
        <Vmax evidence="10">7.3 umol/min/mg enzyme with p-nitrophenyl beta-D-glucoside as substrate (at pH 4.5)</Vmax>
    </kinetics>
</comment>
<comment type="alternative products">
    <event type="alternative splicing"/>
    <isoform>
        <id>Q8GRX1-1</id>
        <name>1</name>
        <sequence type="displayed"/>
    </isoform>
    <text>A number of isoforms are produced. According to EST sequences.</text>
</comment>
<comment type="tissue specificity">
    <text evidence="10">Specifically expressed in roots.</text>
</comment>
<comment type="miscellaneous">
    <text>It seems that the absence of a catalytic proton donor in plant myrosinases is not impairing the hydrolysis of glucosinolates.</text>
</comment>
<comment type="similarity">
    <text evidence="13">Belongs to the glycosyl hydrolase 1 family.</text>
</comment>
<comment type="sequence caution" evidence="13">
    <conflict type="erroneous gene model prediction">
        <sequence resource="EMBL-CDS" id="AAD46026"/>
    </conflict>
</comment>
<evidence type="ECO:0000250" key="1"/>
<evidence type="ECO:0000250" key="2">
    <source>
        <dbReference type="UniProtKB" id="Q1XH05"/>
    </source>
</evidence>
<evidence type="ECO:0000250" key="3">
    <source>
        <dbReference type="UniProtKB" id="Q7XSK0"/>
    </source>
</evidence>
<evidence type="ECO:0000250" key="4">
    <source>
        <dbReference type="UniProtKB" id="Q8GU20"/>
    </source>
</evidence>
<evidence type="ECO:0000250" key="5">
    <source>
        <dbReference type="UniProtKB" id="Q8L7J2"/>
    </source>
</evidence>
<evidence type="ECO:0000250" key="6">
    <source>
        <dbReference type="UniProtKB" id="Q9SPP9"/>
    </source>
</evidence>
<evidence type="ECO:0000255" key="7"/>
<evidence type="ECO:0000255" key="8">
    <source>
        <dbReference type="PROSITE-ProRule" id="PRU00498"/>
    </source>
</evidence>
<evidence type="ECO:0000255" key="9">
    <source>
        <dbReference type="PROSITE-ProRule" id="PRU10055"/>
    </source>
</evidence>
<evidence type="ECO:0000269" key="10">
    <source>
    </source>
</evidence>
<evidence type="ECO:0000303" key="11">
    <source>
    </source>
</evidence>
<evidence type="ECO:0000303" key="12">
    <source>
    </source>
</evidence>
<evidence type="ECO:0000305" key="13"/>
<evidence type="ECO:0000312" key="14">
    <source>
        <dbReference type="Araport" id="AT1G47600"/>
    </source>
</evidence>
<evidence type="ECO:0000312" key="15">
    <source>
        <dbReference type="EMBL" id="AAD46026.1"/>
    </source>
</evidence>
<sequence length="511" mass="57542">MAIPKAHYSLAVLVLLFVVVSSSQKVCNPECKAKEPFHCDNTHAFNRTGFPRNFTFGAATSAYQIEGAAHRALNGWDYFTHRYPEKVPDRSSGDLACDSYDLYKDDVKLLKRMNVQAYRLSIAWSRVLPKGRLTGGVDENGITYYNNLINELKANGIEPYVTIFHWDVPQTLEDEYGGFLSTRIVEDYTNYAELLFQRFGDRVKFWITLNQPFSLATKGYGDGSYPPGRCTGCELGGDSGVEPYTVAHNQLLAHAKTVSLYRKRYQKFQGGKIGTTLIGRWFAPLNEFSELDKAAAKRAFDFFVGWFLDPLVYGKYPTIMREMVGDRLPEFTPEQSALVKGSLDFLGLNYYVTQYATDAPPPTQLNAITDARVTLGFYRNGVPIGVVAPSFVYYPPGFRQILNYIKDNYKNPLTYITENGVADLDLGNVTLATALADNGRIQNHCSHLSCLKCAMKDGCNVAGYFAWSLMDNYEFGNGYTLRFGMNWVNFTNPADRKEKASGKWFSKFLAK</sequence>
<name>BGL34_ARATH</name>
<accession>Q8GRX1</accession>
<accession>Q9SX92</accession>
<proteinExistence type="evidence at protein level"/>